<reference key="1">
    <citation type="journal article" date="1997" name="Proc. Natl. Acad. Sci. U.S.A.">
        <title>Complete nucleotide sequence of the chloroplast genome from the green alga Chlorella vulgaris: the existence of genes possibly involved in chloroplast division.</title>
        <authorList>
            <person name="Wakasugi T."/>
            <person name="Nagai T."/>
            <person name="Kapoor M."/>
            <person name="Sugita M."/>
            <person name="Ito M."/>
            <person name="Ito S."/>
            <person name="Tsudzuki J."/>
            <person name="Nakashima K."/>
            <person name="Tsudzuki T."/>
            <person name="Suzuki Y."/>
            <person name="Hamada A."/>
            <person name="Ohta T."/>
            <person name="Inamura A."/>
            <person name="Yoshinaga K."/>
            <person name="Sugiura M."/>
        </authorList>
    </citation>
    <scope>NUCLEOTIDE SEQUENCE [LARGE SCALE GENOMIC DNA]</scope>
    <source>
        <strain>IAM C-27 / Tamiya</strain>
    </source>
</reference>
<keyword id="KW-0150">Chloroplast</keyword>
<keyword id="KW-0472">Membrane</keyword>
<keyword id="KW-0602">Photosynthesis</keyword>
<keyword id="KW-0604">Photosystem II</keyword>
<keyword id="KW-0934">Plastid</keyword>
<keyword id="KW-0674">Reaction center</keyword>
<keyword id="KW-0793">Thylakoid</keyword>
<keyword id="KW-0812">Transmembrane</keyword>
<keyword id="KW-1133">Transmembrane helix</keyword>
<sequence>MLTLKIFVYTVVTFFVSLFIFGFLSNDPGRNPGQRELD</sequence>
<protein>
    <recommendedName>
        <fullName evidence="1">Photosystem II reaction center protein I</fullName>
        <shortName evidence="1">PSII-I</shortName>
    </recommendedName>
    <alternativeName>
        <fullName evidence="1">PSII 4.8 kDa protein</fullName>
    </alternativeName>
</protein>
<feature type="chain" id="PRO_0000219622" description="Photosystem II reaction center protein I">
    <location>
        <begin position="1"/>
        <end position="38"/>
    </location>
</feature>
<feature type="transmembrane region" description="Helical" evidence="1">
    <location>
        <begin position="4"/>
        <end position="24"/>
    </location>
</feature>
<organism>
    <name type="scientific">Chlorella vulgaris</name>
    <name type="common">Green alga</name>
    <dbReference type="NCBI Taxonomy" id="3077"/>
    <lineage>
        <taxon>Eukaryota</taxon>
        <taxon>Viridiplantae</taxon>
        <taxon>Chlorophyta</taxon>
        <taxon>core chlorophytes</taxon>
        <taxon>Trebouxiophyceae</taxon>
        <taxon>Chlorellales</taxon>
        <taxon>Chlorellaceae</taxon>
        <taxon>Chlorella clade</taxon>
        <taxon>Chlorella</taxon>
    </lineage>
</organism>
<comment type="function">
    <text evidence="1">One of the components of the core complex of photosystem II (PSII), required for its stability and/or assembly. PSII is a light-driven water:plastoquinone oxidoreductase that uses light energy to abstract electrons from H(2)O, generating O(2) and a proton gradient subsequently used for ATP formation. It consists of a core antenna complex that captures photons, and an electron transfer chain that converts photonic excitation into a charge separation.</text>
</comment>
<comment type="subunit">
    <text evidence="1">PSII is composed of 1 copy each of membrane proteins PsbA, PsbB, PsbC, PsbD, PsbE, PsbF, PsbH, PsbI, PsbJ, PsbK, PsbL, PsbM, PsbT, PsbX, PsbY, PsbZ, Psb30/Ycf12, at least 3 peripheral proteins of the oxygen-evolving complex and a large number of cofactors. It forms dimeric complexes.</text>
</comment>
<comment type="subcellular location">
    <subcellularLocation>
        <location evidence="1">Plastid</location>
        <location evidence="1">Chloroplast thylakoid membrane</location>
        <topology evidence="1">Single-pass membrane protein</topology>
    </subcellularLocation>
</comment>
<comment type="similarity">
    <text evidence="1">Belongs to the PsbI family.</text>
</comment>
<accession>P56324</accession>
<gene>
    <name evidence="1" type="primary">psbI</name>
</gene>
<dbReference type="EMBL" id="AB001684">
    <property type="protein sequence ID" value="BAA57863.1"/>
    <property type="molecule type" value="Genomic_DNA"/>
</dbReference>
<dbReference type="PIR" id="T07216">
    <property type="entry name" value="T07216"/>
</dbReference>
<dbReference type="RefSeq" id="NP_045788.1">
    <property type="nucleotide sequence ID" value="NC_001865.1"/>
</dbReference>
<dbReference type="SMR" id="P56324"/>
<dbReference type="GeneID" id="809110"/>
<dbReference type="GO" id="GO:0009535">
    <property type="term" value="C:chloroplast thylakoid membrane"/>
    <property type="evidence" value="ECO:0007669"/>
    <property type="project" value="UniProtKB-SubCell"/>
</dbReference>
<dbReference type="GO" id="GO:0009539">
    <property type="term" value="C:photosystem II reaction center"/>
    <property type="evidence" value="ECO:0007669"/>
    <property type="project" value="InterPro"/>
</dbReference>
<dbReference type="GO" id="GO:0015979">
    <property type="term" value="P:photosynthesis"/>
    <property type="evidence" value="ECO:0007669"/>
    <property type="project" value="UniProtKB-UniRule"/>
</dbReference>
<dbReference type="HAMAP" id="MF_01316">
    <property type="entry name" value="PSII_PsbI"/>
    <property type="match status" value="1"/>
</dbReference>
<dbReference type="InterPro" id="IPR003686">
    <property type="entry name" value="PSII_PsbI"/>
</dbReference>
<dbReference type="InterPro" id="IPR037271">
    <property type="entry name" value="PSII_PsbI_sf"/>
</dbReference>
<dbReference type="NCBIfam" id="NF002735">
    <property type="entry name" value="PRK02655.1"/>
    <property type="match status" value="1"/>
</dbReference>
<dbReference type="PANTHER" id="PTHR35772">
    <property type="entry name" value="PHOTOSYSTEM II REACTION CENTER PROTEIN I"/>
    <property type="match status" value="1"/>
</dbReference>
<dbReference type="PANTHER" id="PTHR35772:SF1">
    <property type="entry name" value="PHOTOSYSTEM II REACTION CENTER PROTEIN I"/>
    <property type="match status" value="1"/>
</dbReference>
<dbReference type="Pfam" id="PF02532">
    <property type="entry name" value="PsbI"/>
    <property type="match status" value="1"/>
</dbReference>
<dbReference type="SUPFAM" id="SSF161041">
    <property type="entry name" value="Photosystem II reaction center protein I, PsbI"/>
    <property type="match status" value="1"/>
</dbReference>
<geneLocation type="chloroplast"/>
<evidence type="ECO:0000255" key="1">
    <source>
        <dbReference type="HAMAP-Rule" id="MF_01316"/>
    </source>
</evidence>
<proteinExistence type="inferred from homology"/>
<name>PSBI_CHLVU</name>